<feature type="initiator methionine" description="Removed" evidence="1">
    <location>
        <position position="1"/>
    </location>
</feature>
<feature type="chain" id="PRO_0000182573" description="Flagellin">
    <location>
        <begin position="2"/>
        <end position="508"/>
    </location>
</feature>
<accession>Q06974</accession>
<name>FLIC_SALON</name>
<comment type="function">
    <text>Flagellin is the subunit protein which polymerizes to form the filaments of bacterial flagella.</text>
</comment>
<comment type="subcellular location">
    <subcellularLocation>
        <location>Secreted</location>
    </subcellularLocation>
    <subcellularLocation>
        <location>Bacterial flagellum</location>
    </subcellularLocation>
</comment>
<comment type="miscellaneous">
    <text>Individual Salmonella serotypes usually alternate between the production of 2 antigenic forms of flagella, termed phase 1 and phase 2, each specified by separate structural genes.</text>
</comment>
<comment type="similarity">
    <text evidence="2">Belongs to the bacterial flagellin family.</text>
</comment>
<reference key="1">
    <citation type="journal article" date="1993" name="J. Bacteriol.">
        <title>Molecular analyses of the Salmonella g. flagellar antigen complex.</title>
        <authorList>
            <person name="Masten B.J."/>
            <person name="Joys T.M."/>
        </authorList>
    </citation>
    <scope>NUCLEOTIDE SEQUENCE [GENOMIC DNA]</scope>
    <source>
        <strain>ATCC 9239 / E1093</strain>
    </source>
</reference>
<reference key="2">
    <citation type="journal article" date="1994" name="Proc. Natl. Acad. Sci. U.S.A.">
        <title>Recombinational basis of serovar diversity in Salmonella enterica.</title>
        <authorList>
            <person name="Li J."/>
            <person name="Nelson K."/>
            <person name="McWhorter A.C."/>
            <person name="Whittam T.S."/>
            <person name="Selander R.K."/>
        </authorList>
    </citation>
    <scope>NUCLEOTIDE SEQUENCE [GENOMIC DNA]</scope>
    <source>
        <strain>S5331</strain>
    </source>
</reference>
<dbReference type="EMBL" id="Z15070">
    <property type="protein sequence ID" value="CAA78779.1"/>
    <property type="molecule type" value="Genomic_DNA"/>
</dbReference>
<dbReference type="EMBL" id="U06201">
    <property type="protein sequence ID" value="AAA17860.1"/>
    <property type="molecule type" value="Unassigned_DNA"/>
</dbReference>
<dbReference type="PIR" id="A53465">
    <property type="entry name" value="A53465"/>
</dbReference>
<dbReference type="PIR" id="S33192">
    <property type="entry name" value="S33192"/>
</dbReference>
<dbReference type="RefSeq" id="WP_023214816.1">
    <property type="nucleotide sequence ID" value="NZ_SGBM01000027.1"/>
</dbReference>
<dbReference type="SMR" id="Q06974"/>
<dbReference type="GO" id="GO:0009288">
    <property type="term" value="C:bacterial-type flagellum"/>
    <property type="evidence" value="ECO:0007669"/>
    <property type="project" value="UniProtKB-SubCell"/>
</dbReference>
<dbReference type="GO" id="GO:0005576">
    <property type="term" value="C:extracellular region"/>
    <property type="evidence" value="ECO:0007669"/>
    <property type="project" value="UniProtKB-SubCell"/>
</dbReference>
<dbReference type="GO" id="GO:0005198">
    <property type="term" value="F:structural molecule activity"/>
    <property type="evidence" value="ECO:0007669"/>
    <property type="project" value="InterPro"/>
</dbReference>
<dbReference type="Gene3D" id="6.10.280.190">
    <property type="match status" value="1"/>
</dbReference>
<dbReference type="Gene3D" id="2.30.220.10">
    <property type="entry name" value="f41 fragment of flagellin, C-terminal domain"/>
    <property type="match status" value="1"/>
</dbReference>
<dbReference type="Gene3D" id="2.170.280.10">
    <property type="entry name" value="f41 fragment of flagellin, middle domain"/>
    <property type="match status" value="1"/>
</dbReference>
<dbReference type="Gene3D" id="1.20.1330.10">
    <property type="entry name" value="f41 fragment of flagellin, N-terminal domain"/>
    <property type="match status" value="1"/>
</dbReference>
<dbReference type="Gene3D" id="6.10.10.10">
    <property type="entry name" value="Flagellar export chaperone, C-terminal domain"/>
    <property type="match status" value="1"/>
</dbReference>
<dbReference type="InterPro" id="IPR001492">
    <property type="entry name" value="Flagellin"/>
</dbReference>
<dbReference type="InterPro" id="IPR046358">
    <property type="entry name" value="Flagellin_C"/>
</dbReference>
<dbReference type="InterPro" id="IPR042187">
    <property type="entry name" value="Flagellin_C_sub2"/>
</dbReference>
<dbReference type="InterPro" id="IPR001029">
    <property type="entry name" value="Flagellin_N"/>
</dbReference>
<dbReference type="PANTHER" id="PTHR42792">
    <property type="entry name" value="FLAGELLIN"/>
    <property type="match status" value="1"/>
</dbReference>
<dbReference type="PANTHER" id="PTHR42792:SF2">
    <property type="entry name" value="FLAGELLIN"/>
    <property type="match status" value="1"/>
</dbReference>
<dbReference type="Pfam" id="PF00700">
    <property type="entry name" value="Flagellin_C"/>
    <property type="match status" value="1"/>
</dbReference>
<dbReference type="Pfam" id="PF00669">
    <property type="entry name" value="Flagellin_N"/>
    <property type="match status" value="1"/>
</dbReference>
<dbReference type="Pfam" id="PF22370">
    <property type="entry name" value="FliC-like_3rd"/>
    <property type="match status" value="1"/>
</dbReference>
<dbReference type="PRINTS" id="PR00207">
    <property type="entry name" value="FLAGELLIN"/>
</dbReference>
<dbReference type="SUPFAM" id="SSF64518">
    <property type="entry name" value="Phase 1 flagellin"/>
    <property type="match status" value="1"/>
</dbReference>
<protein>
    <recommendedName>
        <fullName>Flagellin</fullName>
    </recommendedName>
    <alternativeName>
        <fullName>Phase 1-C flagellin</fullName>
    </alternativeName>
</protein>
<organism>
    <name type="scientific">Salmonella oranienberg</name>
    <dbReference type="NCBI Taxonomy" id="28147"/>
    <lineage>
        <taxon>Bacteria</taxon>
        <taxon>Pseudomonadati</taxon>
        <taxon>Pseudomonadota</taxon>
        <taxon>Gammaproteobacteria</taxon>
        <taxon>Enterobacterales</taxon>
        <taxon>Enterobacteriaceae</taxon>
        <taxon>Salmonella</taxon>
    </lineage>
</organism>
<proteinExistence type="inferred from homology"/>
<sequence length="508" mass="53197">MAQVINTNSLSLLTQNNLNKSQSSLSSAIERLSSGLRINSAKDDAAGQAIANRFTSNIKGLTQASRNANDGISIAQTTEGALNEINNNLQRVRELSVQATNGTNSDSDLKSIQDEIQQRLEEIDRVSNQTQFNGVKVLSQDNQMKIQVGANDGETITIDLQKIDVKSLGLDGFNVNGPKEATVGDLKSSFKNVTGYDTYAVGANKYRVDVNSGAVVTDTTAPTVPDKVYVNAANGQLTTADAQNNTAVDLFKSTKSAAGTDDAKAIATSIKGGKVGDTFDYKGVSFTIDTKAGDDGNGTVSTTINGEKVTLTISDIGASATDVNSAKIQSSKDVYTSVVSGQFTFADKTKNESAKLSDLEANNAVKGESKITVNGAEYTANAAGDKVTLAGKTMFIDKTASGVSTLINEDAAAAKKSTANPLASIDSALSKVDAVRSSLGAIQNRFDSAITNLGNTVTNLNSARSRIEDADYATEVSNMSKAQILQQAGTSVLAQANQVPQNVLSLLR</sequence>
<keyword id="KW-0975">Bacterial flagellum</keyword>
<keyword id="KW-0964">Secreted</keyword>
<gene>
    <name type="primary">fliC</name>
</gene>
<evidence type="ECO:0000250" key="1"/>
<evidence type="ECO:0000305" key="2"/>